<comment type="catalytic activity">
    <reaction evidence="1">
        <text>5-amino-1-(5-phospho-D-ribosyl)imidazole-4-carboxylate + L-aspartate + ATP = (2S)-2-[5-amino-1-(5-phospho-beta-D-ribosyl)imidazole-4-carboxamido]succinate + ADP + phosphate + 2 H(+)</text>
        <dbReference type="Rhea" id="RHEA:22628"/>
        <dbReference type="ChEBI" id="CHEBI:15378"/>
        <dbReference type="ChEBI" id="CHEBI:29991"/>
        <dbReference type="ChEBI" id="CHEBI:30616"/>
        <dbReference type="ChEBI" id="CHEBI:43474"/>
        <dbReference type="ChEBI" id="CHEBI:58443"/>
        <dbReference type="ChEBI" id="CHEBI:77657"/>
        <dbReference type="ChEBI" id="CHEBI:456216"/>
        <dbReference type="EC" id="6.3.2.6"/>
    </reaction>
</comment>
<comment type="pathway">
    <text evidence="1">Purine metabolism; IMP biosynthesis via de novo pathway; 5-amino-1-(5-phospho-D-ribosyl)imidazole-4-carboxamide from 5-amino-1-(5-phospho-D-ribosyl)imidazole-4-carboxylate: step 1/2.</text>
</comment>
<comment type="similarity">
    <text evidence="1">Belongs to the SAICAR synthetase family.</text>
</comment>
<proteinExistence type="inferred from homology"/>
<reference key="1">
    <citation type="journal article" date="2003" name="Nat. Genet.">
        <title>Comparative analysis of the genome sequences of Bordetella pertussis, Bordetella parapertussis and Bordetella bronchiseptica.</title>
        <authorList>
            <person name="Parkhill J."/>
            <person name="Sebaihia M."/>
            <person name="Preston A."/>
            <person name="Murphy L.D."/>
            <person name="Thomson N.R."/>
            <person name="Harris D.E."/>
            <person name="Holden M.T.G."/>
            <person name="Churcher C.M."/>
            <person name="Bentley S.D."/>
            <person name="Mungall K.L."/>
            <person name="Cerdeno-Tarraga A.-M."/>
            <person name="Temple L."/>
            <person name="James K.D."/>
            <person name="Harris B."/>
            <person name="Quail M.A."/>
            <person name="Achtman M."/>
            <person name="Atkin R."/>
            <person name="Baker S."/>
            <person name="Basham D."/>
            <person name="Bason N."/>
            <person name="Cherevach I."/>
            <person name="Chillingworth T."/>
            <person name="Collins M."/>
            <person name="Cronin A."/>
            <person name="Davis P."/>
            <person name="Doggett J."/>
            <person name="Feltwell T."/>
            <person name="Goble A."/>
            <person name="Hamlin N."/>
            <person name="Hauser H."/>
            <person name="Holroyd S."/>
            <person name="Jagels K."/>
            <person name="Leather S."/>
            <person name="Moule S."/>
            <person name="Norberczak H."/>
            <person name="O'Neil S."/>
            <person name="Ormond D."/>
            <person name="Price C."/>
            <person name="Rabbinowitsch E."/>
            <person name="Rutter S."/>
            <person name="Sanders M."/>
            <person name="Saunders D."/>
            <person name="Seeger K."/>
            <person name="Sharp S."/>
            <person name="Simmonds M."/>
            <person name="Skelton J."/>
            <person name="Squares R."/>
            <person name="Squares S."/>
            <person name="Stevens K."/>
            <person name="Unwin L."/>
            <person name="Whitehead S."/>
            <person name="Barrell B.G."/>
            <person name="Maskell D.J."/>
        </authorList>
    </citation>
    <scope>NUCLEOTIDE SEQUENCE [LARGE SCALE GENOMIC DNA]</scope>
    <source>
        <strain>Tohama I / ATCC BAA-589 / NCTC 13251</strain>
    </source>
</reference>
<sequence length="293" mass="32365">MTSALHESSIKSLPLLGRGKVRDMYAVGDDKLLIVASDRISAFDVILDDPIPGKGQVLTELTDFWLRKLAHILPNHSTGIQPEDVVAPDEVDQVRGRAVVVKRLKPILVEAVARGYLIGSGWKDYQASGSVCGIALPAGLQQASQLPEPIFTPAAKAEFGMHDENVDFAHVVKEVGQEMAERIRDVTLRLYGEAARFAATKGIIIADTKFEFGLDDNGTLHLMDEVLTPDSSRFWPADGYRVGISPPSFDKQFVRDWLETQPWDKTPPAPRLPRDVLEKTAAKYREALDRLLA</sequence>
<name>PUR7_BORPE</name>
<gene>
    <name evidence="1" type="primary">purC</name>
    <name type="ordered locus">BP1521</name>
</gene>
<organism>
    <name type="scientific">Bordetella pertussis (strain Tohama I / ATCC BAA-589 / NCTC 13251)</name>
    <dbReference type="NCBI Taxonomy" id="257313"/>
    <lineage>
        <taxon>Bacteria</taxon>
        <taxon>Pseudomonadati</taxon>
        <taxon>Pseudomonadota</taxon>
        <taxon>Betaproteobacteria</taxon>
        <taxon>Burkholderiales</taxon>
        <taxon>Alcaligenaceae</taxon>
        <taxon>Bordetella</taxon>
    </lineage>
</organism>
<keyword id="KW-0067">ATP-binding</keyword>
<keyword id="KW-0436">Ligase</keyword>
<keyword id="KW-0547">Nucleotide-binding</keyword>
<keyword id="KW-0658">Purine biosynthesis</keyword>
<keyword id="KW-1185">Reference proteome</keyword>
<dbReference type="EC" id="6.3.2.6" evidence="1"/>
<dbReference type="EMBL" id="BX640415">
    <property type="protein sequence ID" value="CAE41810.1"/>
    <property type="molecule type" value="Genomic_DNA"/>
</dbReference>
<dbReference type="RefSeq" id="NP_880256.1">
    <property type="nucleotide sequence ID" value="NC_002929.2"/>
</dbReference>
<dbReference type="RefSeq" id="WP_003809513.1">
    <property type="nucleotide sequence ID" value="NZ_CP039022.1"/>
</dbReference>
<dbReference type="SMR" id="Q7VY42"/>
<dbReference type="STRING" id="257313.BP1521"/>
<dbReference type="PaxDb" id="257313-BP1521"/>
<dbReference type="KEGG" id="bpe:BP1521"/>
<dbReference type="PATRIC" id="fig|257313.5.peg.1633"/>
<dbReference type="eggNOG" id="COG0152">
    <property type="taxonomic scope" value="Bacteria"/>
</dbReference>
<dbReference type="HOGENOM" id="CLU_045637_0_0_4"/>
<dbReference type="UniPathway" id="UPA00074">
    <property type="reaction ID" value="UER00131"/>
</dbReference>
<dbReference type="Proteomes" id="UP000002676">
    <property type="component" value="Chromosome"/>
</dbReference>
<dbReference type="GO" id="GO:0005737">
    <property type="term" value="C:cytoplasm"/>
    <property type="evidence" value="ECO:0007669"/>
    <property type="project" value="TreeGrafter"/>
</dbReference>
<dbReference type="GO" id="GO:0005524">
    <property type="term" value="F:ATP binding"/>
    <property type="evidence" value="ECO:0007669"/>
    <property type="project" value="UniProtKB-KW"/>
</dbReference>
<dbReference type="GO" id="GO:0004639">
    <property type="term" value="F:phosphoribosylaminoimidazolesuccinocarboxamide synthase activity"/>
    <property type="evidence" value="ECO:0007669"/>
    <property type="project" value="UniProtKB-UniRule"/>
</dbReference>
<dbReference type="GO" id="GO:0006189">
    <property type="term" value="P:'de novo' IMP biosynthetic process"/>
    <property type="evidence" value="ECO:0007669"/>
    <property type="project" value="UniProtKB-UniRule"/>
</dbReference>
<dbReference type="CDD" id="cd01414">
    <property type="entry name" value="SAICAR_synt_Sc"/>
    <property type="match status" value="1"/>
</dbReference>
<dbReference type="FunFam" id="3.30.470.20:FF:000015">
    <property type="entry name" value="Phosphoribosylaminoimidazole-succinocarboxamide synthase"/>
    <property type="match status" value="1"/>
</dbReference>
<dbReference type="Gene3D" id="3.30.470.20">
    <property type="entry name" value="ATP-grasp fold, B domain"/>
    <property type="match status" value="1"/>
</dbReference>
<dbReference type="Gene3D" id="3.30.200.20">
    <property type="entry name" value="Phosphorylase Kinase, domain 1"/>
    <property type="match status" value="1"/>
</dbReference>
<dbReference type="HAMAP" id="MF_00137">
    <property type="entry name" value="SAICAR_synth"/>
    <property type="match status" value="1"/>
</dbReference>
<dbReference type="InterPro" id="IPR028923">
    <property type="entry name" value="SAICAR_synt/ADE2_N"/>
</dbReference>
<dbReference type="InterPro" id="IPR001636">
    <property type="entry name" value="SAICAR_synth"/>
</dbReference>
<dbReference type="InterPro" id="IPR018236">
    <property type="entry name" value="SAICAR_synthetase_CS"/>
</dbReference>
<dbReference type="NCBIfam" id="NF010568">
    <property type="entry name" value="PRK13961.1"/>
    <property type="match status" value="1"/>
</dbReference>
<dbReference type="NCBIfam" id="TIGR00081">
    <property type="entry name" value="purC"/>
    <property type="match status" value="1"/>
</dbReference>
<dbReference type="PANTHER" id="PTHR43700">
    <property type="entry name" value="PHOSPHORIBOSYLAMINOIMIDAZOLE-SUCCINOCARBOXAMIDE SYNTHASE"/>
    <property type="match status" value="1"/>
</dbReference>
<dbReference type="PANTHER" id="PTHR43700:SF1">
    <property type="entry name" value="PHOSPHORIBOSYLAMINOIMIDAZOLE-SUCCINOCARBOXAMIDE SYNTHASE"/>
    <property type="match status" value="1"/>
</dbReference>
<dbReference type="Pfam" id="PF01259">
    <property type="entry name" value="SAICAR_synt"/>
    <property type="match status" value="1"/>
</dbReference>
<dbReference type="SUPFAM" id="SSF56104">
    <property type="entry name" value="SAICAR synthase-like"/>
    <property type="match status" value="1"/>
</dbReference>
<dbReference type="PROSITE" id="PS01057">
    <property type="entry name" value="SAICAR_SYNTHETASE_1"/>
    <property type="match status" value="1"/>
</dbReference>
<dbReference type="PROSITE" id="PS01058">
    <property type="entry name" value="SAICAR_SYNTHETASE_2"/>
    <property type="match status" value="1"/>
</dbReference>
<protein>
    <recommendedName>
        <fullName evidence="1">Phosphoribosylaminoimidazole-succinocarboxamide synthase</fullName>
        <ecNumber evidence="1">6.3.2.6</ecNumber>
    </recommendedName>
    <alternativeName>
        <fullName evidence="1">SAICAR synthetase</fullName>
    </alternativeName>
</protein>
<feature type="chain" id="PRO_0000100806" description="Phosphoribosylaminoimidazole-succinocarboxamide synthase">
    <location>
        <begin position="1"/>
        <end position="293"/>
    </location>
</feature>
<accession>Q7VY42</accession>
<evidence type="ECO:0000255" key="1">
    <source>
        <dbReference type="HAMAP-Rule" id="MF_00137"/>
    </source>
</evidence>